<feature type="chain" id="PRO_1000046381" description="Phosphopentomutase">
    <location>
        <begin position="1"/>
        <end position="402"/>
    </location>
</feature>
<feature type="binding site" evidence="1">
    <location>
        <position position="10"/>
    </location>
    <ligand>
        <name>Mn(2+)</name>
        <dbReference type="ChEBI" id="CHEBI:29035"/>
        <label>1</label>
    </ligand>
</feature>
<feature type="binding site" evidence="1">
    <location>
        <position position="301"/>
    </location>
    <ligand>
        <name>Mn(2+)</name>
        <dbReference type="ChEBI" id="CHEBI:29035"/>
        <label>2</label>
    </ligand>
</feature>
<feature type="binding site" evidence="1">
    <location>
        <position position="306"/>
    </location>
    <ligand>
        <name>Mn(2+)</name>
        <dbReference type="ChEBI" id="CHEBI:29035"/>
        <label>2</label>
    </ligand>
</feature>
<feature type="binding site" evidence="1">
    <location>
        <position position="342"/>
    </location>
    <ligand>
        <name>Mn(2+)</name>
        <dbReference type="ChEBI" id="CHEBI:29035"/>
        <label>1</label>
    </ligand>
</feature>
<feature type="binding site" evidence="1">
    <location>
        <position position="343"/>
    </location>
    <ligand>
        <name>Mn(2+)</name>
        <dbReference type="ChEBI" id="CHEBI:29035"/>
        <label>1</label>
    </ligand>
</feature>
<feature type="binding site" evidence="1">
    <location>
        <position position="354"/>
    </location>
    <ligand>
        <name>Mn(2+)</name>
        <dbReference type="ChEBI" id="CHEBI:29035"/>
        <label>2</label>
    </ligand>
</feature>
<keyword id="KW-0963">Cytoplasm</keyword>
<keyword id="KW-0413">Isomerase</keyword>
<keyword id="KW-0464">Manganese</keyword>
<keyword id="KW-0479">Metal-binding</keyword>
<keyword id="KW-1185">Reference proteome</keyword>
<organism>
    <name type="scientific">Aeromonas hydrophila subsp. hydrophila (strain ATCC 7966 / DSM 30187 / BCRC 13018 / CCUG 14551 / JCM 1027 / KCTC 2358 / NCIMB 9240 / NCTC 8049)</name>
    <dbReference type="NCBI Taxonomy" id="380703"/>
    <lineage>
        <taxon>Bacteria</taxon>
        <taxon>Pseudomonadati</taxon>
        <taxon>Pseudomonadota</taxon>
        <taxon>Gammaproteobacteria</taxon>
        <taxon>Aeromonadales</taxon>
        <taxon>Aeromonadaceae</taxon>
        <taxon>Aeromonas</taxon>
    </lineage>
</organism>
<comment type="function">
    <text evidence="1">Isomerase that catalyzes the conversion of deoxy-ribose 1-phosphate (dRib-1-P) and ribose 1-phosphate (Rib-1-P) to deoxy-ribose 5-phosphate (dRib-5-P) and ribose 5-phosphate (Rib-5-P), respectively.</text>
</comment>
<comment type="catalytic activity">
    <reaction evidence="1">
        <text>2-deoxy-alpha-D-ribose 1-phosphate = 2-deoxy-D-ribose 5-phosphate</text>
        <dbReference type="Rhea" id="RHEA:27658"/>
        <dbReference type="ChEBI" id="CHEBI:57259"/>
        <dbReference type="ChEBI" id="CHEBI:62877"/>
        <dbReference type="EC" id="5.4.2.7"/>
    </reaction>
</comment>
<comment type="catalytic activity">
    <reaction evidence="1">
        <text>alpha-D-ribose 1-phosphate = D-ribose 5-phosphate</text>
        <dbReference type="Rhea" id="RHEA:18793"/>
        <dbReference type="ChEBI" id="CHEBI:57720"/>
        <dbReference type="ChEBI" id="CHEBI:78346"/>
        <dbReference type="EC" id="5.4.2.7"/>
    </reaction>
</comment>
<comment type="cofactor">
    <cofactor evidence="1">
        <name>Mn(2+)</name>
        <dbReference type="ChEBI" id="CHEBI:29035"/>
    </cofactor>
    <text evidence="1">Binds 2 manganese ions.</text>
</comment>
<comment type="pathway">
    <text evidence="1">Carbohydrate degradation; 2-deoxy-D-ribose 1-phosphate degradation; D-glyceraldehyde 3-phosphate and acetaldehyde from 2-deoxy-alpha-D-ribose 1-phosphate: step 1/2.</text>
</comment>
<comment type="subcellular location">
    <subcellularLocation>
        <location evidence="1">Cytoplasm</location>
    </subcellularLocation>
</comment>
<comment type="similarity">
    <text evidence="1">Belongs to the phosphopentomutase family.</text>
</comment>
<gene>
    <name evidence="1" type="primary">deoB</name>
    <name type="ordered locus">AHA_3688</name>
</gene>
<name>DEOB_AERHH</name>
<reference key="1">
    <citation type="journal article" date="2006" name="J. Bacteriol.">
        <title>Genome sequence of Aeromonas hydrophila ATCC 7966T: jack of all trades.</title>
        <authorList>
            <person name="Seshadri R."/>
            <person name="Joseph S.W."/>
            <person name="Chopra A.K."/>
            <person name="Sha J."/>
            <person name="Shaw J."/>
            <person name="Graf J."/>
            <person name="Haft D.H."/>
            <person name="Wu M."/>
            <person name="Ren Q."/>
            <person name="Rosovitz M.J."/>
            <person name="Madupu R."/>
            <person name="Tallon L."/>
            <person name="Kim M."/>
            <person name="Jin S."/>
            <person name="Vuong H."/>
            <person name="Stine O.C."/>
            <person name="Ali A."/>
            <person name="Horneman A.J."/>
            <person name="Heidelberg J.F."/>
        </authorList>
    </citation>
    <scope>NUCLEOTIDE SEQUENCE [LARGE SCALE GENOMIC DNA]</scope>
    <source>
        <strain>ATCC 7966 / DSM 30187 / BCRC 13018 / CCUG 14551 / JCM 1027 / KCTC 2358 / NCIMB 9240 / NCTC 8049</strain>
    </source>
</reference>
<protein>
    <recommendedName>
        <fullName evidence="1">Phosphopentomutase</fullName>
        <ecNumber evidence="1">5.4.2.7</ecNumber>
    </recommendedName>
    <alternativeName>
        <fullName evidence="1">Phosphodeoxyribomutase</fullName>
    </alternativeName>
</protein>
<proteinExistence type="inferred from homology"/>
<evidence type="ECO:0000255" key="1">
    <source>
        <dbReference type="HAMAP-Rule" id="MF_00740"/>
    </source>
</evidence>
<accession>A0KPE2</accession>
<sequence>MKRTFILMMDSFGIGAAADADKFGDVGANTLGHIAKACAAGEIEGRGALNLPNLSKLGLGHAGELASGTFPAGLNKDIDVVGAYGFAQELSSGKDTPSGHWEIAGVPVLFEWGYFHDHHNSFPQELLDAIVEKAGLPGYLGNCHASGTQVLDDLGEEHMRTGKPILYTSADSVFQIACHEETYGLEKLYELCHIVRELLEPYNIGRVIARPFVGSGKGNFKRTGNRHDYSVLPPAPTVLDYMKEAGGQVVSIGKIADIYAQQGITKQVKGTGLTELWDRTLEEVKAAGDQTIVFTNFVDFDSSYGHRRDVKGYADALEYFDSRLPELFELLEDGDVVVLTADHGCDPTWGGTDHTREYIPVLFYGKPVKAGSVGRRETFADIGQSIAAYHGLPKLAYGTSFL</sequence>
<dbReference type="EC" id="5.4.2.7" evidence="1"/>
<dbReference type="EMBL" id="CP000462">
    <property type="protein sequence ID" value="ABK37158.1"/>
    <property type="molecule type" value="Genomic_DNA"/>
</dbReference>
<dbReference type="RefSeq" id="WP_011707411.1">
    <property type="nucleotide sequence ID" value="NC_008570.1"/>
</dbReference>
<dbReference type="RefSeq" id="YP_858143.1">
    <property type="nucleotide sequence ID" value="NC_008570.1"/>
</dbReference>
<dbReference type="SMR" id="A0KPE2"/>
<dbReference type="STRING" id="380703.AHA_3688"/>
<dbReference type="EnsemblBacteria" id="ABK37158">
    <property type="protein sequence ID" value="ABK37158"/>
    <property type="gene ID" value="AHA_3688"/>
</dbReference>
<dbReference type="GeneID" id="4488014"/>
<dbReference type="KEGG" id="aha:AHA_3688"/>
<dbReference type="PATRIC" id="fig|380703.7.peg.3666"/>
<dbReference type="eggNOG" id="COG1015">
    <property type="taxonomic scope" value="Bacteria"/>
</dbReference>
<dbReference type="HOGENOM" id="CLU_053861_0_0_6"/>
<dbReference type="OrthoDB" id="9769930at2"/>
<dbReference type="UniPathway" id="UPA00002">
    <property type="reaction ID" value="UER00467"/>
</dbReference>
<dbReference type="Proteomes" id="UP000000756">
    <property type="component" value="Chromosome"/>
</dbReference>
<dbReference type="GO" id="GO:0005829">
    <property type="term" value="C:cytosol"/>
    <property type="evidence" value="ECO:0007669"/>
    <property type="project" value="TreeGrafter"/>
</dbReference>
<dbReference type="GO" id="GO:0000287">
    <property type="term" value="F:magnesium ion binding"/>
    <property type="evidence" value="ECO:0007669"/>
    <property type="project" value="InterPro"/>
</dbReference>
<dbReference type="GO" id="GO:0030145">
    <property type="term" value="F:manganese ion binding"/>
    <property type="evidence" value="ECO:0007669"/>
    <property type="project" value="UniProtKB-UniRule"/>
</dbReference>
<dbReference type="GO" id="GO:0008973">
    <property type="term" value="F:phosphopentomutase activity"/>
    <property type="evidence" value="ECO:0007669"/>
    <property type="project" value="UniProtKB-UniRule"/>
</dbReference>
<dbReference type="GO" id="GO:0006018">
    <property type="term" value="P:2-deoxyribose 1-phosphate catabolic process"/>
    <property type="evidence" value="ECO:0007669"/>
    <property type="project" value="UniProtKB-UniRule"/>
</dbReference>
<dbReference type="GO" id="GO:0006015">
    <property type="term" value="P:5-phosphoribose 1-diphosphate biosynthetic process"/>
    <property type="evidence" value="ECO:0007669"/>
    <property type="project" value="UniProtKB-UniPathway"/>
</dbReference>
<dbReference type="GO" id="GO:0043094">
    <property type="term" value="P:metabolic compound salvage"/>
    <property type="evidence" value="ECO:0007669"/>
    <property type="project" value="InterPro"/>
</dbReference>
<dbReference type="GO" id="GO:0009117">
    <property type="term" value="P:nucleotide metabolic process"/>
    <property type="evidence" value="ECO:0007669"/>
    <property type="project" value="InterPro"/>
</dbReference>
<dbReference type="CDD" id="cd16009">
    <property type="entry name" value="PPM"/>
    <property type="match status" value="1"/>
</dbReference>
<dbReference type="FunFam" id="3.30.70.1250:FF:000001">
    <property type="entry name" value="Phosphopentomutase"/>
    <property type="match status" value="1"/>
</dbReference>
<dbReference type="Gene3D" id="3.40.720.10">
    <property type="entry name" value="Alkaline Phosphatase, subunit A"/>
    <property type="match status" value="1"/>
</dbReference>
<dbReference type="Gene3D" id="3.30.70.1250">
    <property type="entry name" value="Phosphopentomutase"/>
    <property type="match status" value="1"/>
</dbReference>
<dbReference type="HAMAP" id="MF_00740">
    <property type="entry name" value="Phosphopentomut"/>
    <property type="match status" value="1"/>
</dbReference>
<dbReference type="InterPro" id="IPR017850">
    <property type="entry name" value="Alkaline_phosphatase_core_sf"/>
</dbReference>
<dbReference type="InterPro" id="IPR010045">
    <property type="entry name" value="DeoB"/>
</dbReference>
<dbReference type="InterPro" id="IPR006124">
    <property type="entry name" value="Metalloenzyme"/>
</dbReference>
<dbReference type="InterPro" id="IPR024052">
    <property type="entry name" value="Phosphopentomutase_DeoB_cap_sf"/>
</dbReference>
<dbReference type="NCBIfam" id="TIGR01696">
    <property type="entry name" value="deoB"/>
    <property type="match status" value="1"/>
</dbReference>
<dbReference type="NCBIfam" id="NF003766">
    <property type="entry name" value="PRK05362.1"/>
    <property type="match status" value="1"/>
</dbReference>
<dbReference type="PANTHER" id="PTHR21110">
    <property type="entry name" value="PHOSPHOPENTOMUTASE"/>
    <property type="match status" value="1"/>
</dbReference>
<dbReference type="PANTHER" id="PTHR21110:SF0">
    <property type="entry name" value="PHOSPHOPENTOMUTASE"/>
    <property type="match status" value="1"/>
</dbReference>
<dbReference type="Pfam" id="PF01676">
    <property type="entry name" value="Metalloenzyme"/>
    <property type="match status" value="1"/>
</dbReference>
<dbReference type="PIRSF" id="PIRSF001491">
    <property type="entry name" value="Ppentomutase"/>
    <property type="match status" value="1"/>
</dbReference>
<dbReference type="SUPFAM" id="SSF53649">
    <property type="entry name" value="Alkaline phosphatase-like"/>
    <property type="match status" value="1"/>
</dbReference>
<dbReference type="SUPFAM" id="SSF143856">
    <property type="entry name" value="DeoB insert domain-like"/>
    <property type="match status" value="1"/>
</dbReference>